<dbReference type="EMBL" id="CP000447">
    <property type="protein sequence ID" value="ABI71123.1"/>
    <property type="molecule type" value="Genomic_DNA"/>
</dbReference>
<dbReference type="RefSeq" id="WP_011636744.1">
    <property type="nucleotide sequence ID" value="NC_008345.1"/>
</dbReference>
<dbReference type="SMR" id="Q085E2"/>
<dbReference type="STRING" id="318167.Sfri_1270"/>
<dbReference type="KEGG" id="sfr:Sfri_1270"/>
<dbReference type="eggNOG" id="COG0052">
    <property type="taxonomic scope" value="Bacteria"/>
</dbReference>
<dbReference type="HOGENOM" id="CLU_040318_1_0_6"/>
<dbReference type="OrthoDB" id="9808036at2"/>
<dbReference type="Proteomes" id="UP000000684">
    <property type="component" value="Chromosome"/>
</dbReference>
<dbReference type="GO" id="GO:0022627">
    <property type="term" value="C:cytosolic small ribosomal subunit"/>
    <property type="evidence" value="ECO:0007669"/>
    <property type="project" value="TreeGrafter"/>
</dbReference>
<dbReference type="GO" id="GO:0003735">
    <property type="term" value="F:structural constituent of ribosome"/>
    <property type="evidence" value="ECO:0007669"/>
    <property type="project" value="InterPro"/>
</dbReference>
<dbReference type="GO" id="GO:0006412">
    <property type="term" value="P:translation"/>
    <property type="evidence" value="ECO:0007669"/>
    <property type="project" value="UniProtKB-UniRule"/>
</dbReference>
<dbReference type="CDD" id="cd01425">
    <property type="entry name" value="RPS2"/>
    <property type="match status" value="1"/>
</dbReference>
<dbReference type="FunFam" id="1.10.287.610:FF:000001">
    <property type="entry name" value="30S ribosomal protein S2"/>
    <property type="match status" value="1"/>
</dbReference>
<dbReference type="Gene3D" id="3.40.50.10490">
    <property type="entry name" value="Glucose-6-phosphate isomerase like protein, domain 1"/>
    <property type="match status" value="1"/>
</dbReference>
<dbReference type="Gene3D" id="1.10.287.610">
    <property type="entry name" value="Helix hairpin bin"/>
    <property type="match status" value="1"/>
</dbReference>
<dbReference type="HAMAP" id="MF_00291_B">
    <property type="entry name" value="Ribosomal_uS2_B"/>
    <property type="match status" value="1"/>
</dbReference>
<dbReference type="InterPro" id="IPR001865">
    <property type="entry name" value="Ribosomal_uS2"/>
</dbReference>
<dbReference type="InterPro" id="IPR005706">
    <property type="entry name" value="Ribosomal_uS2_bac/mit/plastid"/>
</dbReference>
<dbReference type="InterPro" id="IPR018130">
    <property type="entry name" value="Ribosomal_uS2_CS"/>
</dbReference>
<dbReference type="InterPro" id="IPR023591">
    <property type="entry name" value="Ribosomal_uS2_flav_dom_sf"/>
</dbReference>
<dbReference type="NCBIfam" id="TIGR01011">
    <property type="entry name" value="rpsB_bact"/>
    <property type="match status" value="1"/>
</dbReference>
<dbReference type="PANTHER" id="PTHR12534">
    <property type="entry name" value="30S RIBOSOMAL PROTEIN S2 PROKARYOTIC AND ORGANELLAR"/>
    <property type="match status" value="1"/>
</dbReference>
<dbReference type="PANTHER" id="PTHR12534:SF0">
    <property type="entry name" value="SMALL RIBOSOMAL SUBUNIT PROTEIN US2M"/>
    <property type="match status" value="1"/>
</dbReference>
<dbReference type="Pfam" id="PF00318">
    <property type="entry name" value="Ribosomal_S2"/>
    <property type="match status" value="1"/>
</dbReference>
<dbReference type="PRINTS" id="PR00395">
    <property type="entry name" value="RIBOSOMALS2"/>
</dbReference>
<dbReference type="SUPFAM" id="SSF52313">
    <property type="entry name" value="Ribosomal protein S2"/>
    <property type="match status" value="1"/>
</dbReference>
<dbReference type="PROSITE" id="PS00962">
    <property type="entry name" value="RIBOSOMAL_S2_1"/>
    <property type="match status" value="1"/>
</dbReference>
<dbReference type="PROSITE" id="PS00963">
    <property type="entry name" value="RIBOSOMAL_S2_2"/>
    <property type="match status" value="1"/>
</dbReference>
<protein>
    <recommendedName>
        <fullName evidence="1">Small ribosomal subunit protein uS2</fullName>
    </recommendedName>
    <alternativeName>
        <fullName evidence="2">30S ribosomal protein S2</fullName>
    </alternativeName>
</protein>
<sequence length="242" mass="26469">MTTVSMRDMLQAGVHFGHQTRYWNPKMKPFIFGARNGVHIINLEHTVPMFNEALAFISNIASKKGKVLFVGTKRAAGEAIKASALSCDQYYVDHRWLGGMLTNWKTVRQSIKRLKELESQSVDGTFDKLTKKEALMRSRELDKLEKSLGGIKNMGGLPDVLFVIGADHEHIAIKEANNLGIPVVAVVDTNSAPDGVNYIVPGNDDAMRAIRLYTSSVAAAANAGRGQDLAVQAEQDGFVEAV</sequence>
<accession>Q085E2</accession>
<proteinExistence type="inferred from homology"/>
<name>RS2_SHEFN</name>
<reference key="1">
    <citation type="submission" date="2006-08" db="EMBL/GenBank/DDBJ databases">
        <title>Complete sequence of Shewanella frigidimarina NCIMB 400.</title>
        <authorList>
            <consortium name="US DOE Joint Genome Institute"/>
            <person name="Copeland A."/>
            <person name="Lucas S."/>
            <person name="Lapidus A."/>
            <person name="Barry K."/>
            <person name="Detter J.C."/>
            <person name="Glavina del Rio T."/>
            <person name="Hammon N."/>
            <person name="Israni S."/>
            <person name="Dalin E."/>
            <person name="Tice H."/>
            <person name="Pitluck S."/>
            <person name="Fredrickson J.K."/>
            <person name="Kolker E."/>
            <person name="McCuel L.A."/>
            <person name="DiChristina T."/>
            <person name="Nealson K.H."/>
            <person name="Newman D."/>
            <person name="Tiedje J.M."/>
            <person name="Zhou J."/>
            <person name="Romine M.F."/>
            <person name="Culley D.E."/>
            <person name="Serres M."/>
            <person name="Chertkov O."/>
            <person name="Brettin T."/>
            <person name="Bruce D."/>
            <person name="Han C."/>
            <person name="Tapia R."/>
            <person name="Gilna P."/>
            <person name="Schmutz J."/>
            <person name="Larimer F."/>
            <person name="Land M."/>
            <person name="Hauser L."/>
            <person name="Kyrpides N."/>
            <person name="Mikhailova N."/>
            <person name="Richardson P."/>
        </authorList>
    </citation>
    <scope>NUCLEOTIDE SEQUENCE [LARGE SCALE GENOMIC DNA]</scope>
    <source>
        <strain>NCIMB 400</strain>
    </source>
</reference>
<evidence type="ECO:0000255" key="1">
    <source>
        <dbReference type="HAMAP-Rule" id="MF_00291"/>
    </source>
</evidence>
<evidence type="ECO:0000305" key="2"/>
<gene>
    <name evidence="1" type="primary">rpsB</name>
    <name type="ordered locus">Sfri_1270</name>
</gene>
<comment type="similarity">
    <text evidence="1">Belongs to the universal ribosomal protein uS2 family.</text>
</comment>
<feature type="chain" id="PRO_1000004064" description="Small ribosomal subunit protein uS2">
    <location>
        <begin position="1"/>
        <end position="242"/>
    </location>
</feature>
<organism>
    <name type="scientific">Shewanella frigidimarina (strain NCIMB 400)</name>
    <dbReference type="NCBI Taxonomy" id="318167"/>
    <lineage>
        <taxon>Bacteria</taxon>
        <taxon>Pseudomonadati</taxon>
        <taxon>Pseudomonadota</taxon>
        <taxon>Gammaproteobacteria</taxon>
        <taxon>Alteromonadales</taxon>
        <taxon>Shewanellaceae</taxon>
        <taxon>Shewanella</taxon>
    </lineage>
</organism>
<keyword id="KW-1185">Reference proteome</keyword>
<keyword id="KW-0687">Ribonucleoprotein</keyword>
<keyword id="KW-0689">Ribosomal protein</keyword>